<protein>
    <recommendedName>
        <fullName evidence="1">Exodeoxyribonuclease 7 small subunit</fullName>
        <ecNumber evidence="1">3.1.11.6</ecNumber>
    </recommendedName>
    <alternativeName>
        <fullName evidence="1">Exodeoxyribonuclease VII small subunit</fullName>
        <shortName evidence="1">Exonuclease VII small subunit</shortName>
    </alternativeName>
</protein>
<dbReference type="EC" id="3.1.11.6" evidence="1"/>
<dbReference type="EMBL" id="CP001339">
    <property type="protein sequence ID" value="ACL71925.1"/>
    <property type="molecule type" value="Genomic_DNA"/>
</dbReference>
<dbReference type="RefSeq" id="WP_012637413.1">
    <property type="nucleotide sequence ID" value="NC_011901.1"/>
</dbReference>
<dbReference type="SMR" id="B8GN64"/>
<dbReference type="STRING" id="396588.Tgr7_0834"/>
<dbReference type="KEGG" id="tgr:Tgr7_0834"/>
<dbReference type="eggNOG" id="COG1722">
    <property type="taxonomic scope" value="Bacteria"/>
</dbReference>
<dbReference type="HOGENOM" id="CLU_145918_3_3_6"/>
<dbReference type="OrthoDB" id="9801128at2"/>
<dbReference type="Proteomes" id="UP000002383">
    <property type="component" value="Chromosome"/>
</dbReference>
<dbReference type="GO" id="GO:0005829">
    <property type="term" value="C:cytosol"/>
    <property type="evidence" value="ECO:0007669"/>
    <property type="project" value="TreeGrafter"/>
</dbReference>
<dbReference type="GO" id="GO:0009318">
    <property type="term" value="C:exodeoxyribonuclease VII complex"/>
    <property type="evidence" value="ECO:0007669"/>
    <property type="project" value="InterPro"/>
</dbReference>
<dbReference type="GO" id="GO:0008855">
    <property type="term" value="F:exodeoxyribonuclease VII activity"/>
    <property type="evidence" value="ECO:0007669"/>
    <property type="project" value="UniProtKB-UniRule"/>
</dbReference>
<dbReference type="GO" id="GO:0006308">
    <property type="term" value="P:DNA catabolic process"/>
    <property type="evidence" value="ECO:0007669"/>
    <property type="project" value="UniProtKB-UniRule"/>
</dbReference>
<dbReference type="Gene3D" id="1.10.287.1040">
    <property type="entry name" value="Exonuclease VII, small subunit"/>
    <property type="match status" value="1"/>
</dbReference>
<dbReference type="HAMAP" id="MF_00337">
    <property type="entry name" value="Exonuc_7_S"/>
    <property type="match status" value="1"/>
</dbReference>
<dbReference type="InterPro" id="IPR003761">
    <property type="entry name" value="Exonuc_VII_S"/>
</dbReference>
<dbReference type="InterPro" id="IPR037004">
    <property type="entry name" value="Exonuc_VII_ssu_sf"/>
</dbReference>
<dbReference type="NCBIfam" id="NF002140">
    <property type="entry name" value="PRK00977.1-4"/>
    <property type="match status" value="1"/>
</dbReference>
<dbReference type="NCBIfam" id="TIGR01280">
    <property type="entry name" value="xseB"/>
    <property type="match status" value="1"/>
</dbReference>
<dbReference type="PANTHER" id="PTHR34137">
    <property type="entry name" value="EXODEOXYRIBONUCLEASE 7 SMALL SUBUNIT"/>
    <property type="match status" value="1"/>
</dbReference>
<dbReference type="PANTHER" id="PTHR34137:SF1">
    <property type="entry name" value="EXODEOXYRIBONUCLEASE 7 SMALL SUBUNIT"/>
    <property type="match status" value="1"/>
</dbReference>
<dbReference type="Pfam" id="PF02609">
    <property type="entry name" value="Exonuc_VII_S"/>
    <property type="match status" value="1"/>
</dbReference>
<dbReference type="PIRSF" id="PIRSF006488">
    <property type="entry name" value="Exonuc_VII_S"/>
    <property type="match status" value="1"/>
</dbReference>
<dbReference type="SUPFAM" id="SSF116842">
    <property type="entry name" value="XseB-like"/>
    <property type="match status" value="1"/>
</dbReference>
<comment type="function">
    <text evidence="1">Bidirectionally degrades single-stranded DNA into large acid-insoluble oligonucleotides, which are then degraded further into small acid-soluble oligonucleotides.</text>
</comment>
<comment type="catalytic activity">
    <reaction evidence="1">
        <text>Exonucleolytic cleavage in either 5'- to 3'- or 3'- to 5'-direction to yield nucleoside 5'-phosphates.</text>
        <dbReference type="EC" id="3.1.11.6"/>
    </reaction>
</comment>
<comment type="subunit">
    <text evidence="1">Heterooligomer composed of large and small subunits.</text>
</comment>
<comment type="subcellular location">
    <subcellularLocation>
        <location evidence="1">Cytoplasm</location>
    </subcellularLocation>
</comment>
<comment type="similarity">
    <text evidence="1">Belongs to the XseB family.</text>
</comment>
<feature type="chain" id="PRO_1000200269" description="Exodeoxyribonuclease 7 small subunit">
    <location>
        <begin position="1"/>
        <end position="85"/>
    </location>
</feature>
<feature type="region of interest" description="Disordered" evidence="2">
    <location>
        <begin position="66"/>
        <end position="85"/>
    </location>
</feature>
<feature type="compositionally biased region" description="Acidic residues" evidence="2">
    <location>
        <begin position="68"/>
        <end position="85"/>
    </location>
</feature>
<gene>
    <name evidence="1" type="primary">xseB</name>
    <name type="ordered locus">Tgr7_0834</name>
</gene>
<keyword id="KW-0963">Cytoplasm</keyword>
<keyword id="KW-0269">Exonuclease</keyword>
<keyword id="KW-0378">Hydrolase</keyword>
<keyword id="KW-0540">Nuclease</keyword>
<keyword id="KW-1185">Reference proteome</keyword>
<organism>
    <name type="scientific">Thioalkalivibrio sulfidiphilus (strain HL-EbGR7)</name>
    <dbReference type="NCBI Taxonomy" id="396588"/>
    <lineage>
        <taxon>Bacteria</taxon>
        <taxon>Pseudomonadati</taxon>
        <taxon>Pseudomonadota</taxon>
        <taxon>Gammaproteobacteria</taxon>
        <taxon>Chromatiales</taxon>
        <taxon>Ectothiorhodospiraceae</taxon>
        <taxon>Thioalkalivibrio</taxon>
    </lineage>
</organism>
<proteinExistence type="inferred from homology"/>
<reference key="1">
    <citation type="journal article" date="2011" name="Stand. Genomic Sci.">
        <title>Complete genome sequence of 'Thioalkalivibrio sulfidophilus' HL-EbGr7.</title>
        <authorList>
            <person name="Muyzer G."/>
            <person name="Sorokin D.Y."/>
            <person name="Mavromatis K."/>
            <person name="Lapidus A."/>
            <person name="Clum A."/>
            <person name="Ivanova N."/>
            <person name="Pati A."/>
            <person name="d'Haeseleer P."/>
            <person name="Woyke T."/>
            <person name="Kyrpides N.C."/>
        </authorList>
    </citation>
    <scope>NUCLEOTIDE SEQUENCE [LARGE SCALE GENOMIC DNA]</scope>
    <source>
        <strain>HL-EbGR7</strain>
    </source>
</reference>
<accession>B8GN64</accession>
<evidence type="ECO:0000255" key="1">
    <source>
        <dbReference type="HAMAP-Rule" id="MF_00337"/>
    </source>
</evidence>
<evidence type="ECO:0000256" key="2">
    <source>
        <dbReference type="SAM" id="MobiDB-lite"/>
    </source>
</evidence>
<name>EX7S_THISH</name>
<sequence length="85" mass="9098">MAKKNAPSAPADFEQALGELEALVERMEQGELSLEASLAEFERGIALARQCQQALQAAEQKVRLLSGEGEEVPLDTPDAEDGDGE</sequence>